<organism>
    <name type="scientific">Staphylococcus aureus (strain COL)</name>
    <dbReference type="NCBI Taxonomy" id="93062"/>
    <lineage>
        <taxon>Bacteria</taxon>
        <taxon>Bacillati</taxon>
        <taxon>Bacillota</taxon>
        <taxon>Bacilli</taxon>
        <taxon>Bacillales</taxon>
        <taxon>Staphylococcaceae</taxon>
        <taxon>Staphylococcus</taxon>
    </lineage>
</organism>
<gene>
    <name type="primary">sarU</name>
    <name type="ordered locus">SACOL2507</name>
</gene>
<feature type="chain" id="PRO_0000219603" description="HTH-type transcriptional regulator SarU">
    <location>
        <begin position="1"/>
        <end position="247"/>
    </location>
</feature>
<feature type="DNA-binding region" description="H-T-H motif" evidence="2">
    <location>
        <begin position="53"/>
        <end position="76"/>
    </location>
</feature>
<feature type="DNA-binding region" description="H-T-H motif" evidence="2">
    <location>
        <begin position="178"/>
        <end position="201"/>
    </location>
</feature>
<evidence type="ECO:0000250" key="1"/>
<evidence type="ECO:0000255" key="2"/>
<evidence type="ECO:0000305" key="3"/>
<reference key="1">
    <citation type="journal article" date="2005" name="J. Bacteriol.">
        <title>Insights on evolution of virulence and resistance from the complete genome analysis of an early methicillin-resistant Staphylococcus aureus strain and a biofilm-producing methicillin-resistant Staphylococcus epidermidis strain.</title>
        <authorList>
            <person name="Gill S.R."/>
            <person name="Fouts D.E."/>
            <person name="Archer G.L."/>
            <person name="Mongodin E.F."/>
            <person name="DeBoy R.T."/>
            <person name="Ravel J."/>
            <person name="Paulsen I.T."/>
            <person name="Kolonay J.F."/>
            <person name="Brinkac L.M."/>
            <person name="Beanan M.J."/>
            <person name="Dodson R.J."/>
            <person name="Daugherty S.C."/>
            <person name="Madupu R."/>
            <person name="Angiuoli S.V."/>
            <person name="Durkin A.S."/>
            <person name="Haft D.H."/>
            <person name="Vamathevan J.J."/>
            <person name="Khouri H."/>
            <person name="Utterback T.R."/>
            <person name="Lee C."/>
            <person name="Dimitrov G."/>
            <person name="Jiang L."/>
            <person name="Qin H."/>
            <person name="Weidman J."/>
            <person name="Tran K."/>
            <person name="Kang K.H."/>
            <person name="Hance I.R."/>
            <person name="Nelson K.E."/>
            <person name="Fraser C.M."/>
        </authorList>
    </citation>
    <scope>NUCLEOTIDE SEQUENCE [LARGE SCALE GENOMIC DNA]</scope>
    <source>
        <strain>COL</strain>
    </source>
</reference>
<proteinExistence type="inferred from homology"/>
<comment type="function">
    <text evidence="1">Positive regulator of RNAII and RNAIII in a cell density-dependent manner. It can contribute to the expression of virulence genes controlled by agr. May also regulate target genes via an agr-independent pathway (By similarity).</text>
</comment>
<comment type="subcellular location">
    <subcellularLocation>
        <location evidence="1">Cytoplasm</location>
    </subcellularLocation>
</comment>
<comment type="similarity">
    <text evidence="3">Belongs to the SarA family.</text>
</comment>
<name>SARU_STAAC</name>
<protein>
    <recommendedName>
        <fullName>HTH-type transcriptional regulator SarU</fullName>
    </recommendedName>
    <alternativeName>
        <fullName>Staphylococcal accessory regulator U</fullName>
    </alternativeName>
</protein>
<dbReference type="EMBL" id="CP000046">
    <property type="protein sequence ID" value="AAW37286.1"/>
    <property type="molecule type" value="Genomic_DNA"/>
</dbReference>
<dbReference type="RefSeq" id="WP_000386369.1">
    <property type="nucleotide sequence ID" value="NZ_JBGOFO010000001.1"/>
</dbReference>
<dbReference type="SMR" id="Q5HD55"/>
<dbReference type="KEGG" id="sac:SACOL2507"/>
<dbReference type="HOGENOM" id="CLU_097164_0_0_9"/>
<dbReference type="Proteomes" id="UP000000530">
    <property type="component" value="Chromosome"/>
</dbReference>
<dbReference type="GO" id="GO:0005737">
    <property type="term" value="C:cytoplasm"/>
    <property type="evidence" value="ECO:0007669"/>
    <property type="project" value="UniProtKB-SubCell"/>
</dbReference>
<dbReference type="GO" id="GO:0003677">
    <property type="term" value="F:DNA binding"/>
    <property type="evidence" value="ECO:0007669"/>
    <property type="project" value="UniProtKB-KW"/>
</dbReference>
<dbReference type="GO" id="GO:0003700">
    <property type="term" value="F:DNA-binding transcription factor activity"/>
    <property type="evidence" value="ECO:0007669"/>
    <property type="project" value="InterPro"/>
</dbReference>
<dbReference type="GO" id="GO:0006950">
    <property type="term" value="P:response to stress"/>
    <property type="evidence" value="ECO:0007669"/>
    <property type="project" value="TreeGrafter"/>
</dbReference>
<dbReference type="Gene3D" id="1.10.10.10">
    <property type="entry name" value="Winged helix-like DNA-binding domain superfamily/Winged helix DNA-binding domain"/>
    <property type="match status" value="2"/>
</dbReference>
<dbReference type="InterPro" id="IPR039422">
    <property type="entry name" value="MarR/SlyA-like"/>
</dbReference>
<dbReference type="InterPro" id="IPR010166">
    <property type="entry name" value="SarA/Rot_dom"/>
</dbReference>
<dbReference type="InterPro" id="IPR055166">
    <property type="entry name" value="Transc_reg_Sar_Rot_HTH"/>
</dbReference>
<dbReference type="InterPro" id="IPR036388">
    <property type="entry name" value="WH-like_DNA-bd_sf"/>
</dbReference>
<dbReference type="InterPro" id="IPR036390">
    <property type="entry name" value="WH_DNA-bd_sf"/>
</dbReference>
<dbReference type="NCBIfam" id="TIGR01889">
    <property type="entry name" value="Staph_reg_Sar"/>
    <property type="match status" value="2"/>
</dbReference>
<dbReference type="PANTHER" id="PTHR33164:SF5">
    <property type="entry name" value="ORGANIC HYDROPEROXIDE RESISTANCE TRANSCRIPTIONAL REGULATOR"/>
    <property type="match status" value="1"/>
</dbReference>
<dbReference type="PANTHER" id="PTHR33164">
    <property type="entry name" value="TRANSCRIPTIONAL REGULATOR, MARR FAMILY"/>
    <property type="match status" value="1"/>
</dbReference>
<dbReference type="Pfam" id="PF22381">
    <property type="entry name" value="Staph_reg_Sar_Rot"/>
    <property type="match status" value="2"/>
</dbReference>
<dbReference type="SUPFAM" id="SSF46785">
    <property type="entry name" value="Winged helix' DNA-binding domain"/>
    <property type="match status" value="2"/>
</dbReference>
<sequence length="247" mass="29792">MDYQTFEKVNKFINVKAYIFFLTQELKQQYKLSLKELLILAYFYYKNEHSISLKEIIGDILYKQSDVVKNIKSLSKKGFINKSRNEADERRIFVSVTPIQRKKIACVINELDKIIKGFNKERDYIKYQWAPKYSKEFFILFMNIMYSKDFLKYRFNLTFLDLSILYVISSRKNEILNLKDLFESIRFMYPQIVRSVNRLNNKGMLIKERSLADERIVLIKINKIQYNTIKSIFTDTSKILKPRKFFF</sequence>
<keyword id="KW-0010">Activator</keyword>
<keyword id="KW-0963">Cytoplasm</keyword>
<keyword id="KW-0238">DNA-binding</keyword>
<keyword id="KW-0677">Repeat</keyword>
<keyword id="KW-0804">Transcription</keyword>
<keyword id="KW-0805">Transcription regulation</keyword>
<keyword id="KW-0843">Virulence</keyword>
<accession>Q5HD55</accession>